<evidence type="ECO:0000250" key="1"/>
<evidence type="ECO:0000250" key="2">
    <source>
        <dbReference type="UniProtKB" id="Q9UEE5"/>
    </source>
</evidence>
<evidence type="ECO:0000255" key="3">
    <source>
        <dbReference type="PROSITE-ProRule" id="PRU00159"/>
    </source>
</evidence>
<evidence type="ECO:0000255" key="4">
    <source>
        <dbReference type="PROSITE-ProRule" id="PRU10027"/>
    </source>
</evidence>
<evidence type="ECO:0000256" key="5">
    <source>
        <dbReference type="SAM" id="MobiDB-lite"/>
    </source>
</evidence>
<evidence type="ECO:0000305" key="6"/>
<evidence type="ECO:0000312" key="7">
    <source>
        <dbReference type="EMBL" id="AAM18182.1"/>
    </source>
</evidence>
<accession>Q8BG48</accession>
<accession>Q3TNG7</accession>
<accession>Q8BLV9</accession>
<accession>Q923E7</accession>
<dbReference type="EC" id="2.7.11.1"/>
<dbReference type="EMBL" id="AY092028">
    <property type="protein sequence ID" value="AAM18182.1"/>
    <property type="molecule type" value="mRNA"/>
</dbReference>
<dbReference type="EMBL" id="AK035693">
    <property type="protein sequence ID" value="BAC29154.1"/>
    <property type="molecule type" value="mRNA"/>
</dbReference>
<dbReference type="EMBL" id="AK041139">
    <property type="protein sequence ID" value="BAC30835.1"/>
    <property type="molecule type" value="mRNA"/>
</dbReference>
<dbReference type="EMBL" id="AK076932">
    <property type="protein sequence ID" value="BAC36531.1"/>
    <property type="molecule type" value="mRNA"/>
</dbReference>
<dbReference type="EMBL" id="AK083332">
    <property type="protein sequence ID" value="BAC38870.1"/>
    <property type="molecule type" value="mRNA"/>
</dbReference>
<dbReference type="EMBL" id="AK153108">
    <property type="protein sequence ID" value="BAE31726.1"/>
    <property type="molecule type" value="mRNA"/>
</dbReference>
<dbReference type="EMBL" id="AK165291">
    <property type="protein sequence ID" value="BAE38122.1"/>
    <property type="molecule type" value="mRNA"/>
</dbReference>
<dbReference type="EMBL" id="BC006579">
    <property type="protein sequence ID" value="AAH06579.1"/>
    <property type="molecule type" value="mRNA"/>
</dbReference>
<dbReference type="CCDS" id="CCDS14955.1"/>
<dbReference type="RefSeq" id="NP_598571.2">
    <property type="nucleotide sequence ID" value="NM_133810.3"/>
</dbReference>
<dbReference type="SMR" id="Q8BG48"/>
<dbReference type="BioGRID" id="221027">
    <property type="interactions" value="2"/>
</dbReference>
<dbReference type="FunCoup" id="Q8BG48">
    <property type="interactions" value="2135"/>
</dbReference>
<dbReference type="IntAct" id="Q8BG48">
    <property type="interactions" value="1"/>
</dbReference>
<dbReference type="MINT" id="Q8BG48"/>
<dbReference type="STRING" id="10090.ENSMUSP00000027263"/>
<dbReference type="GlyGen" id="Q8BG48">
    <property type="glycosylation" value="1 site, 1 N-linked glycan (1 site)"/>
</dbReference>
<dbReference type="iPTMnet" id="Q8BG48"/>
<dbReference type="PhosphoSitePlus" id="Q8BG48"/>
<dbReference type="SwissPalm" id="Q8BG48"/>
<dbReference type="jPOST" id="Q8BG48"/>
<dbReference type="PaxDb" id="10090-ENSMUSP00000027263"/>
<dbReference type="PeptideAtlas" id="Q8BG48"/>
<dbReference type="ProteomicsDB" id="258629"/>
<dbReference type="Pumba" id="Q8BG48"/>
<dbReference type="Antibodypedia" id="19872">
    <property type="antibodies" value="414 antibodies from 42 providers"/>
</dbReference>
<dbReference type="DNASU" id="98267"/>
<dbReference type="Ensembl" id="ENSMUST00000027263.14">
    <property type="protein sequence ID" value="ENSMUSP00000027263.8"/>
    <property type="gene ID" value="ENSMUSG00000026094.15"/>
</dbReference>
<dbReference type="GeneID" id="98267"/>
<dbReference type="KEGG" id="mmu:98267"/>
<dbReference type="UCSC" id="uc007azj.2">
    <property type="organism name" value="mouse"/>
</dbReference>
<dbReference type="AGR" id="MGI:2138162"/>
<dbReference type="CTD" id="9262"/>
<dbReference type="MGI" id="MGI:2138162">
    <property type="gene designation" value="Stk17b"/>
</dbReference>
<dbReference type="VEuPathDB" id="HostDB:ENSMUSG00000026094"/>
<dbReference type="eggNOG" id="KOG0032">
    <property type="taxonomic scope" value="Eukaryota"/>
</dbReference>
<dbReference type="GeneTree" id="ENSGT00940000154014"/>
<dbReference type="HOGENOM" id="CLU_000288_63_0_1"/>
<dbReference type="InParanoid" id="Q8BG48"/>
<dbReference type="OMA" id="LSHPWLW"/>
<dbReference type="OrthoDB" id="504170at2759"/>
<dbReference type="PhylomeDB" id="Q8BG48"/>
<dbReference type="TreeFam" id="TF314166"/>
<dbReference type="BioGRID-ORCS" id="98267">
    <property type="hits" value="3 hits in 83 CRISPR screens"/>
</dbReference>
<dbReference type="ChiTaRS" id="Stk17b">
    <property type="organism name" value="mouse"/>
</dbReference>
<dbReference type="PRO" id="PR:Q8BG48"/>
<dbReference type="Proteomes" id="UP000000589">
    <property type="component" value="Chromosome 1"/>
</dbReference>
<dbReference type="RNAct" id="Q8BG48">
    <property type="molecule type" value="protein"/>
</dbReference>
<dbReference type="Bgee" id="ENSMUSG00000026094">
    <property type="expression patterns" value="Expressed in peripheral lymph node and 236 other cell types or tissues"/>
</dbReference>
<dbReference type="ExpressionAtlas" id="Q8BG48">
    <property type="expression patterns" value="baseline and differential"/>
</dbReference>
<dbReference type="GO" id="GO:0015629">
    <property type="term" value="C:actin cytoskeleton"/>
    <property type="evidence" value="ECO:0007669"/>
    <property type="project" value="Ensembl"/>
</dbReference>
<dbReference type="GO" id="GO:0005793">
    <property type="term" value="C:endoplasmic reticulum-Golgi intermediate compartment"/>
    <property type="evidence" value="ECO:0007669"/>
    <property type="project" value="UniProtKB-SubCell"/>
</dbReference>
<dbReference type="GO" id="GO:0090543">
    <property type="term" value="C:Flemming body"/>
    <property type="evidence" value="ECO:0007669"/>
    <property type="project" value="Ensembl"/>
</dbReference>
<dbReference type="GO" id="GO:0005654">
    <property type="term" value="C:nucleoplasm"/>
    <property type="evidence" value="ECO:0007669"/>
    <property type="project" value="Ensembl"/>
</dbReference>
<dbReference type="GO" id="GO:0005634">
    <property type="term" value="C:nucleus"/>
    <property type="evidence" value="ECO:0000250"/>
    <property type="project" value="UniProtKB"/>
</dbReference>
<dbReference type="GO" id="GO:0005886">
    <property type="term" value="C:plasma membrane"/>
    <property type="evidence" value="ECO:0007669"/>
    <property type="project" value="UniProtKB-SubCell"/>
</dbReference>
<dbReference type="GO" id="GO:0005524">
    <property type="term" value="F:ATP binding"/>
    <property type="evidence" value="ECO:0000250"/>
    <property type="project" value="UniProtKB"/>
</dbReference>
<dbReference type="GO" id="GO:0004672">
    <property type="term" value="F:protein kinase activity"/>
    <property type="evidence" value="ECO:0000250"/>
    <property type="project" value="UniProtKB"/>
</dbReference>
<dbReference type="GO" id="GO:0106310">
    <property type="term" value="F:protein serine kinase activity"/>
    <property type="evidence" value="ECO:0007669"/>
    <property type="project" value="RHEA"/>
</dbReference>
<dbReference type="GO" id="GO:0004674">
    <property type="term" value="F:protein serine/threonine kinase activity"/>
    <property type="evidence" value="ECO:0000250"/>
    <property type="project" value="UniProtKB"/>
</dbReference>
<dbReference type="GO" id="GO:0006915">
    <property type="term" value="P:apoptotic process"/>
    <property type="evidence" value="ECO:0007669"/>
    <property type="project" value="UniProtKB-KW"/>
</dbReference>
<dbReference type="GO" id="GO:0035556">
    <property type="term" value="P:intracellular signal transduction"/>
    <property type="evidence" value="ECO:0000250"/>
    <property type="project" value="UniProtKB"/>
</dbReference>
<dbReference type="GO" id="GO:2000271">
    <property type="term" value="P:positive regulation of fibroblast apoptotic process"/>
    <property type="evidence" value="ECO:0000250"/>
    <property type="project" value="UniProtKB"/>
</dbReference>
<dbReference type="GO" id="GO:0046777">
    <property type="term" value="P:protein autophosphorylation"/>
    <property type="evidence" value="ECO:0000250"/>
    <property type="project" value="UniProtKB"/>
</dbReference>
<dbReference type="GO" id="GO:0006468">
    <property type="term" value="P:protein phosphorylation"/>
    <property type="evidence" value="ECO:0000250"/>
    <property type="project" value="UniProtKB"/>
</dbReference>
<dbReference type="CDD" id="cd14198">
    <property type="entry name" value="STKc_DRAK2"/>
    <property type="match status" value="1"/>
</dbReference>
<dbReference type="FunFam" id="3.30.200.20:FF:000175">
    <property type="entry name" value="Serine/threonine-protein kinase 17B"/>
    <property type="match status" value="1"/>
</dbReference>
<dbReference type="FunFam" id="1.10.510.10:FF:000422">
    <property type="entry name" value="serine/threonine-protein kinase 17B"/>
    <property type="match status" value="1"/>
</dbReference>
<dbReference type="Gene3D" id="3.30.200.20">
    <property type="entry name" value="Phosphorylase Kinase, domain 1"/>
    <property type="match status" value="1"/>
</dbReference>
<dbReference type="Gene3D" id="1.10.510.10">
    <property type="entry name" value="Transferase(Phosphotransferase) domain 1"/>
    <property type="match status" value="1"/>
</dbReference>
<dbReference type="InterPro" id="IPR011009">
    <property type="entry name" value="Kinase-like_dom_sf"/>
</dbReference>
<dbReference type="InterPro" id="IPR000719">
    <property type="entry name" value="Prot_kinase_dom"/>
</dbReference>
<dbReference type="InterPro" id="IPR017441">
    <property type="entry name" value="Protein_kinase_ATP_BS"/>
</dbReference>
<dbReference type="InterPro" id="IPR008271">
    <property type="entry name" value="Ser/Thr_kinase_AS"/>
</dbReference>
<dbReference type="InterPro" id="IPR042763">
    <property type="entry name" value="ST17B_STKc"/>
</dbReference>
<dbReference type="PANTHER" id="PTHR24342">
    <property type="entry name" value="SERINE/THREONINE-PROTEIN KINASE 17"/>
    <property type="match status" value="1"/>
</dbReference>
<dbReference type="PANTHER" id="PTHR24342:SF5">
    <property type="entry name" value="SERINE_THREONINE-PROTEIN KINASE 17B"/>
    <property type="match status" value="1"/>
</dbReference>
<dbReference type="Pfam" id="PF00069">
    <property type="entry name" value="Pkinase"/>
    <property type="match status" value="1"/>
</dbReference>
<dbReference type="SMART" id="SM00220">
    <property type="entry name" value="S_TKc"/>
    <property type="match status" value="1"/>
</dbReference>
<dbReference type="SUPFAM" id="SSF56112">
    <property type="entry name" value="Protein kinase-like (PK-like)"/>
    <property type="match status" value="1"/>
</dbReference>
<dbReference type="PROSITE" id="PS00107">
    <property type="entry name" value="PROTEIN_KINASE_ATP"/>
    <property type="match status" value="1"/>
</dbReference>
<dbReference type="PROSITE" id="PS50011">
    <property type="entry name" value="PROTEIN_KINASE_DOM"/>
    <property type="match status" value="1"/>
</dbReference>
<dbReference type="PROSITE" id="PS00108">
    <property type="entry name" value="PROTEIN_KINASE_ST"/>
    <property type="match status" value="1"/>
</dbReference>
<name>ST17B_MOUSE</name>
<reference evidence="7" key="1">
    <citation type="submission" date="2002-03" db="EMBL/GenBank/DDBJ databases">
        <title>mDRAK2, a lymphoid-enriched apoptotic nuclear kinase, is activated during thymocyte selection.</title>
        <authorList>
            <person name="Walsh C.M."/>
            <person name="Wen B."/>
            <person name="Bain G."/>
            <person name="Kee B."/>
            <person name="Katayama C."/>
            <person name="Murre C."/>
            <person name="Hedrick S.M."/>
        </authorList>
    </citation>
    <scope>NUCLEOTIDE SEQUENCE [MRNA]</scope>
    <source>
        <strain evidence="7">C57BL/6J</strain>
    </source>
</reference>
<reference key="2">
    <citation type="journal article" date="2005" name="Science">
        <title>The transcriptional landscape of the mammalian genome.</title>
        <authorList>
            <person name="Carninci P."/>
            <person name="Kasukawa T."/>
            <person name="Katayama S."/>
            <person name="Gough J."/>
            <person name="Frith M.C."/>
            <person name="Maeda N."/>
            <person name="Oyama R."/>
            <person name="Ravasi T."/>
            <person name="Lenhard B."/>
            <person name="Wells C."/>
            <person name="Kodzius R."/>
            <person name="Shimokawa K."/>
            <person name="Bajic V.B."/>
            <person name="Brenner S.E."/>
            <person name="Batalov S."/>
            <person name="Forrest A.R."/>
            <person name="Zavolan M."/>
            <person name="Davis M.J."/>
            <person name="Wilming L.G."/>
            <person name="Aidinis V."/>
            <person name="Allen J.E."/>
            <person name="Ambesi-Impiombato A."/>
            <person name="Apweiler R."/>
            <person name="Aturaliya R.N."/>
            <person name="Bailey T.L."/>
            <person name="Bansal M."/>
            <person name="Baxter L."/>
            <person name="Beisel K.W."/>
            <person name="Bersano T."/>
            <person name="Bono H."/>
            <person name="Chalk A.M."/>
            <person name="Chiu K.P."/>
            <person name="Choudhary V."/>
            <person name="Christoffels A."/>
            <person name="Clutterbuck D.R."/>
            <person name="Crowe M.L."/>
            <person name="Dalla E."/>
            <person name="Dalrymple B.P."/>
            <person name="de Bono B."/>
            <person name="Della Gatta G."/>
            <person name="di Bernardo D."/>
            <person name="Down T."/>
            <person name="Engstrom P."/>
            <person name="Fagiolini M."/>
            <person name="Faulkner G."/>
            <person name="Fletcher C.F."/>
            <person name="Fukushima T."/>
            <person name="Furuno M."/>
            <person name="Futaki S."/>
            <person name="Gariboldi M."/>
            <person name="Georgii-Hemming P."/>
            <person name="Gingeras T.R."/>
            <person name="Gojobori T."/>
            <person name="Green R.E."/>
            <person name="Gustincich S."/>
            <person name="Harbers M."/>
            <person name="Hayashi Y."/>
            <person name="Hensch T.K."/>
            <person name="Hirokawa N."/>
            <person name="Hill D."/>
            <person name="Huminiecki L."/>
            <person name="Iacono M."/>
            <person name="Ikeo K."/>
            <person name="Iwama A."/>
            <person name="Ishikawa T."/>
            <person name="Jakt M."/>
            <person name="Kanapin A."/>
            <person name="Katoh M."/>
            <person name="Kawasawa Y."/>
            <person name="Kelso J."/>
            <person name="Kitamura H."/>
            <person name="Kitano H."/>
            <person name="Kollias G."/>
            <person name="Krishnan S.P."/>
            <person name="Kruger A."/>
            <person name="Kummerfeld S.K."/>
            <person name="Kurochkin I.V."/>
            <person name="Lareau L.F."/>
            <person name="Lazarevic D."/>
            <person name="Lipovich L."/>
            <person name="Liu J."/>
            <person name="Liuni S."/>
            <person name="McWilliam S."/>
            <person name="Madan Babu M."/>
            <person name="Madera M."/>
            <person name="Marchionni L."/>
            <person name="Matsuda H."/>
            <person name="Matsuzawa S."/>
            <person name="Miki H."/>
            <person name="Mignone F."/>
            <person name="Miyake S."/>
            <person name="Morris K."/>
            <person name="Mottagui-Tabar S."/>
            <person name="Mulder N."/>
            <person name="Nakano N."/>
            <person name="Nakauchi H."/>
            <person name="Ng P."/>
            <person name="Nilsson R."/>
            <person name="Nishiguchi S."/>
            <person name="Nishikawa S."/>
            <person name="Nori F."/>
            <person name="Ohara O."/>
            <person name="Okazaki Y."/>
            <person name="Orlando V."/>
            <person name="Pang K.C."/>
            <person name="Pavan W.J."/>
            <person name="Pavesi G."/>
            <person name="Pesole G."/>
            <person name="Petrovsky N."/>
            <person name="Piazza S."/>
            <person name="Reed J."/>
            <person name="Reid J.F."/>
            <person name="Ring B.Z."/>
            <person name="Ringwald M."/>
            <person name="Rost B."/>
            <person name="Ruan Y."/>
            <person name="Salzberg S.L."/>
            <person name="Sandelin A."/>
            <person name="Schneider C."/>
            <person name="Schoenbach C."/>
            <person name="Sekiguchi K."/>
            <person name="Semple C.A."/>
            <person name="Seno S."/>
            <person name="Sessa L."/>
            <person name="Sheng Y."/>
            <person name="Shibata Y."/>
            <person name="Shimada H."/>
            <person name="Shimada K."/>
            <person name="Silva D."/>
            <person name="Sinclair B."/>
            <person name="Sperling S."/>
            <person name="Stupka E."/>
            <person name="Sugiura K."/>
            <person name="Sultana R."/>
            <person name="Takenaka Y."/>
            <person name="Taki K."/>
            <person name="Tammoja K."/>
            <person name="Tan S.L."/>
            <person name="Tang S."/>
            <person name="Taylor M.S."/>
            <person name="Tegner J."/>
            <person name="Teichmann S.A."/>
            <person name="Ueda H.R."/>
            <person name="van Nimwegen E."/>
            <person name="Verardo R."/>
            <person name="Wei C.L."/>
            <person name="Yagi K."/>
            <person name="Yamanishi H."/>
            <person name="Zabarovsky E."/>
            <person name="Zhu S."/>
            <person name="Zimmer A."/>
            <person name="Hide W."/>
            <person name="Bult C."/>
            <person name="Grimmond S.M."/>
            <person name="Teasdale R.D."/>
            <person name="Liu E.T."/>
            <person name="Brusic V."/>
            <person name="Quackenbush J."/>
            <person name="Wahlestedt C."/>
            <person name="Mattick J.S."/>
            <person name="Hume D.A."/>
            <person name="Kai C."/>
            <person name="Sasaki D."/>
            <person name="Tomaru Y."/>
            <person name="Fukuda S."/>
            <person name="Kanamori-Katayama M."/>
            <person name="Suzuki M."/>
            <person name="Aoki J."/>
            <person name="Arakawa T."/>
            <person name="Iida J."/>
            <person name="Imamura K."/>
            <person name="Itoh M."/>
            <person name="Kato T."/>
            <person name="Kawaji H."/>
            <person name="Kawagashira N."/>
            <person name="Kawashima T."/>
            <person name="Kojima M."/>
            <person name="Kondo S."/>
            <person name="Konno H."/>
            <person name="Nakano K."/>
            <person name="Ninomiya N."/>
            <person name="Nishio T."/>
            <person name="Okada M."/>
            <person name="Plessy C."/>
            <person name="Shibata K."/>
            <person name="Shiraki T."/>
            <person name="Suzuki S."/>
            <person name="Tagami M."/>
            <person name="Waki K."/>
            <person name="Watahiki A."/>
            <person name="Okamura-Oho Y."/>
            <person name="Suzuki H."/>
            <person name="Kawai J."/>
            <person name="Hayashizaki Y."/>
        </authorList>
    </citation>
    <scope>NUCLEOTIDE SEQUENCE [LARGE SCALE MRNA]</scope>
    <source>
        <strain>C57BL/6J</strain>
        <tissue>Aorta</tissue>
        <tissue>Bone marrow</tissue>
        <tissue>Spleen</tissue>
        <tissue>Testis</tissue>
        <tissue>Thymus</tissue>
        <tissue>Urinary bladder</tissue>
        <tissue>Vein</tissue>
    </source>
</reference>
<reference evidence="6" key="3">
    <citation type="journal article" date="2004" name="Genome Res.">
        <title>The status, quality, and expansion of the NIH full-length cDNA project: the Mammalian Gene Collection (MGC).</title>
        <authorList>
            <consortium name="The MGC Project Team"/>
        </authorList>
    </citation>
    <scope>NUCLEOTIDE SEQUENCE [LARGE SCALE MRNA]</scope>
</reference>
<reference key="4">
    <citation type="journal article" date="2010" name="Cell">
        <title>A tissue-specific atlas of mouse protein phosphorylation and expression.</title>
        <authorList>
            <person name="Huttlin E.L."/>
            <person name="Jedrychowski M.P."/>
            <person name="Elias J.E."/>
            <person name="Goswami T."/>
            <person name="Rad R."/>
            <person name="Beausoleil S.A."/>
            <person name="Villen J."/>
            <person name="Haas W."/>
            <person name="Sowa M.E."/>
            <person name="Gygi S.P."/>
        </authorList>
    </citation>
    <scope>IDENTIFICATION BY MASS SPECTROMETRY [LARGE SCALE ANALYSIS]</scope>
    <source>
        <tissue>Spleen</tissue>
        <tissue>Testis</tissue>
    </source>
</reference>
<protein>
    <recommendedName>
        <fullName>Serine/threonine-protein kinase 17B</fullName>
        <ecNumber>2.7.11.1</ecNumber>
    </recommendedName>
    <alternativeName>
        <fullName>DAP kinase-related apoptosis-inducing protein kinase 2</fullName>
    </alternativeName>
</protein>
<organism evidence="7">
    <name type="scientific">Mus musculus</name>
    <name type="common">Mouse</name>
    <dbReference type="NCBI Taxonomy" id="10090"/>
    <lineage>
        <taxon>Eukaryota</taxon>
        <taxon>Metazoa</taxon>
        <taxon>Chordata</taxon>
        <taxon>Craniata</taxon>
        <taxon>Vertebrata</taxon>
        <taxon>Euteleostomi</taxon>
        <taxon>Mammalia</taxon>
        <taxon>Eutheria</taxon>
        <taxon>Euarchontoglires</taxon>
        <taxon>Glires</taxon>
        <taxon>Rodentia</taxon>
        <taxon>Myomorpha</taxon>
        <taxon>Muroidea</taxon>
        <taxon>Muridae</taxon>
        <taxon>Murinae</taxon>
        <taxon>Mus</taxon>
        <taxon>Mus</taxon>
    </lineage>
</organism>
<proteinExistence type="evidence at protein level"/>
<comment type="function">
    <text evidence="1">Acts as a positive regulator of apoptosis. Phosphorylates myosin light chains (By similarity).</text>
</comment>
<comment type="catalytic activity">
    <reaction evidence="2">
        <text>L-seryl-[protein] + ATP = O-phospho-L-seryl-[protein] + ADP + H(+)</text>
        <dbReference type="Rhea" id="RHEA:17989"/>
        <dbReference type="Rhea" id="RHEA-COMP:9863"/>
        <dbReference type="Rhea" id="RHEA-COMP:11604"/>
        <dbReference type="ChEBI" id="CHEBI:15378"/>
        <dbReference type="ChEBI" id="CHEBI:29999"/>
        <dbReference type="ChEBI" id="CHEBI:30616"/>
        <dbReference type="ChEBI" id="CHEBI:83421"/>
        <dbReference type="ChEBI" id="CHEBI:456216"/>
        <dbReference type="EC" id="2.7.11.1"/>
    </reaction>
</comment>
<comment type="catalytic activity">
    <reaction evidence="2">
        <text>L-threonyl-[protein] + ATP = O-phospho-L-threonyl-[protein] + ADP + H(+)</text>
        <dbReference type="Rhea" id="RHEA:46608"/>
        <dbReference type="Rhea" id="RHEA-COMP:11060"/>
        <dbReference type="Rhea" id="RHEA-COMP:11605"/>
        <dbReference type="ChEBI" id="CHEBI:15378"/>
        <dbReference type="ChEBI" id="CHEBI:30013"/>
        <dbReference type="ChEBI" id="CHEBI:30616"/>
        <dbReference type="ChEBI" id="CHEBI:61977"/>
        <dbReference type="ChEBI" id="CHEBI:456216"/>
        <dbReference type="EC" id="2.7.11.1"/>
    </reaction>
</comment>
<comment type="subunit">
    <text evidence="1">Interacts with CHP1; the interaction induces CHP1 to translocate from the Golgi to the nucleus.</text>
</comment>
<comment type="subcellular location">
    <subcellularLocation>
        <location evidence="1">Nucleus</location>
    </subcellularLocation>
    <subcellularLocation>
        <location evidence="1">Cell membrane</location>
    </subcellularLocation>
    <subcellularLocation>
        <location evidence="1">Endoplasmic reticulum-Golgi intermediate compartment</location>
    </subcellularLocation>
    <text evidence="1">Colocalizes with STK17B at the plasma membrane.</text>
</comment>
<comment type="PTM">
    <text evidence="2">Autophosphorylated.</text>
</comment>
<comment type="similarity">
    <text evidence="6">Belongs to the protein kinase superfamily. CAMK Ser/Thr protein kinase family. DAP kinase subfamily.</text>
</comment>
<feature type="chain" id="PRO_0000086707" description="Serine/threonine-protein kinase 17B">
    <location>
        <begin position="1"/>
        <end position="372"/>
    </location>
</feature>
<feature type="domain" description="Protein kinase" evidence="3">
    <location>
        <begin position="33"/>
        <end position="293"/>
    </location>
</feature>
<feature type="region of interest" description="Disordered" evidence="5">
    <location>
        <begin position="305"/>
        <end position="348"/>
    </location>
</feature>
<feature type="compositionally biased region" description="Polar residues" evidence="5">
    <location>
        <begin position="307"/>
        <end position="319"/>
    </location>
</feature>
<feature type="active site" description="Proton acceptor" evidence="3 4">
    <location>
        <position position="158"/>
    </location>
</feature>
<feature type="binding site" evidence="3">
    <location>
        <begin position="39"/>
        <end position="47"/>
    </location>
    <ligand>
        <name>ATP</name>
        <dbReference type="ChEBI" id="CHEBI:30616"/>
    </ligand>
</feature>
<feature type="binding site" evidence="3">
    <location>
        <position position="62"/>
    </location>
    <ligand>
        <name>ATP</name>
        <dbReference type="ChEBI" id="CHEBI:30616"/>
    </ligand>
</feature>
<feature type="sequence conflict" description="In Ref. 3; AAH06579." evidence="6" ref="3">
    <original>I</original>
    <variation>M</variation>
    <location>
        <position position="23"/>
    </location>
</feature>
<keyword id="KW-0053">Apoptosis</keyword>
<keyword id="KW-0067">ATP-binding</keyword>
<keyword id="KW-1003">Cell membrane</keyword>
<keyword id="KW-0418">Kinase</keyword>
<keyword id="KW-0472">Membrane</keyword>
<keyword id="KW-0547">Nucleotide-binding</keyword>
<keyword id="KW-0539">Nucleus</keyword>
<keyword id="KW-0597">Phosphoprotein</keyword>
<keyword id="KW-1185">Reference proteome</keyword>
<keyword id="KW-0723">Serine/threonine-protein kinase</keyword>
<keyword id="KW-0808">Transferase</keyword>
<gene>
    <name type="primary">Stk17b</name>
    <name type="synonym">Drak2</name>
</gene>
<sequence>MSRRRFDCRSVSGLLTTTPQTPIKTENFNNFYTLTPKELGRGKFAVVRQCISKSTGQEYAAKSLKKRRRGQDCRAEILHEIAVLELARSCPHVINLHEVYENATEIILVLEYAAGGEIFNLCLPELAEMVSENDVIRLIKQILEGVHYLHQNNIVHLDLKPQNILLSSIYPLGDIKIVDFGMSRKIGNASELREIMGTPEYLAPEILNYDPITTATDMWNIGIIAYMLLTHTSPFVGEDNQETYLNISQVNVDYSEEMFSSVSQLATDFIQSLLVKNPEKRPTAESCLSHSWLQQWDFGSLFHPEETSGSSQIQDLTLRSSEEKTSKSSCNGSCGAREDKENIPEDGSLVSKRFRFDDSLPSPHELVPDLFC</sequence>